<proteinExistence type="evidence at protein level"/>
<keyword id="KW-0903">Direct protein sequencing</keyword>
<keyword id="KW-1015">Disulfide bond</keyword>
<keyword id="KW-1185">Reference proteome</keyword>
<keyword id="KW-0708">Seed storage protein</keyword>
<keyword id="KW-0732">Signal</keyword>
<keyword id="KW-0758">Storage protein</keyword>
<keyword id="KW-0926">Vacuole</keyword>
<feature type="signal peptide" evidence="4">
    <location>
        <begin position="1"/>
        <end position="22"/>
    </location>
</feature>
<feature type="propeptide" id="PRO_0000032146" evidence="3 4">
    <location>
        <begin position="23"/>
        <end position="35"/>
    </location>
</feature>
<feature type="chain" id="PRO_0000032147" description="2S albumin small chain" evidence="4">
    <location>
        <begin position="36"/>
        <end status="unknown"/>
    </location>
</feature>
<feature type="chain" id="PRO_0000032148" description="2S albumin large chain" evidence="4">
    <location>
        <begin position="75"/>
        <end position="141"/>
    </location>
</feature>
<feature type="disulfide bond" description="Interchain (between small and large chains)" evidence="1">
    <location>
        <begin position="43"/>
        <end position="97"/>
    </location>
</feature>
<feature type="disulfide bond" description="Interchain (between small and large chains)" evidence="1">
    <location>
        <begin position="55"/>
        <end position="86"/>
    </location>
</feature>
<feature type="disulfide bond" evidence="1">
    <location>
        <begin position="87"/>
        <end position="132"/>
    </location>
</feature>
<feature type="disulfide bond" evidence="1">
    <location>
        <begin position="99"/>
        <end position="139"/>
    </location>
</feature>
<protein>
    <recommendedName>
        <fullName evidence="5">2S seed storage albumin protein</fullName>
    </recommendedName>
    <alternativeName>
        <fullName evidence="5">2S albumin</fullName>
    </alternativeName>
    <component>
        <recommendedName>
            <fullName>2S albumin small chain</fullName>
        </recommendedName>
    </component>
    <component>
        <recommendedName>
            <fullName>2S albumin large chain</fullName>
        </recommendedName>
    </component>
</protein>
<name>2SS_CUCMA</name>
<comment type="function">
    <text evidence="5">This is a 2S seed storage protein.</text>
</comment>
<comment type="subunit">
    <text evidence="5">The mature protein consists of a small and a large chain linked by 2 disulfide bonds.</text>
</comment>
<comment type="subcellular location">
    <subcellularLocation>
        <location evidence="4">Vacuole</location>
        <location evidence="4">Aleurone grain</location>
    </subcellularLocation>
    <subcellularLocation>
        <location evidence="4">Vacuole</location>
    </subcellularLocation>
    <text>Cotyledonary membrane-bound vacuolar protein bodies.</text>
</comment>
<comment type="similarity">
    <text evidence="2">Belongs to the 2S seed storage albumins family.</text>
</comment>
<sequence>MARLTSIIALFAVALLVADAYAYRTTITTVEVEENRQGREERCRQMSAREELRSCEQYLRQQSRDVLQMRGIENPWRREGGSFDECCRELKNVDEECRCDMLEEIAREEQRQARGQEGRQMLQKARNLPSMCGIRPQRCDF</sequence>
<dbReference type="EMBL" id="D16560">
    <property type="protein sequence ID" value="BAA03993.1"/>
    <property type="molecule type" value="mRNA"/>
</dbReference>
<dbReference type="SMR" id="Q39649"/>
<dbReference type="Allergome" id="12224">
    <property type="allergen name" value="Cuc ma 5"/>
</dbReference>
<dbReference type="Allergome" id="12225">
    <property type="allergen name" value="Cuc ma 5.0101"/>
</dbReference>
<dbReference type="Proteomes" id="UP000504608">
    <property type="component" value="Unplaced"/>
</dbReference>
<dbReference type="GO" id="GO:0033095">
    <property type="term" value="C:aleurone grain"/>
    <property type="evidence" value="ECO:0007669"/>
    <property type="project" value="UniProtKB-SubCell"/>
</dbReference>
<dbReference type="GO" id="GO:0000322">
    <property type="term" value="C:storage vacuole"/>
    <property type="evidence" value="ECO:0000314"/>
    <property type="project" value="UniProtKB"/>
</dbReference>
<dbReference type="GO" id="GO:0045735">
    <property type="term" value="F:nutrient reservoir activity"/>
    <property type="evidence" value="ECO:0000304"/>
    <property type="project" value="UniProtKB"/>
</dbReference>
<dbReference type="CDD" id="cd00261">
    <property type="entry name" value="AAI_SS"/>
    <property type="match status" value="1"/>
</dbReference>
<dbReference type="Gene3D" id="1.10.110.10">
    <property type="entry name" value="Plant lipid-transfer and hydrophobic proteins"/>
    <property type="match status" value="1"/>
</dbReference>
<dbReference type="InterPro" id="IPR036312">
    <property type="entry name" value="Bifun_inhib/LTP/seed_sf"/>
</dbReference>
<dbReference type="InterPro" id="IPR016140">
    <property type="entry name" value="Bifunc_inhib/LTP/seed_store"/>
</dbReference>
<dbReference type="InterPro" id="IPR000617">
    <property type="entry name" value="Napin/2SS/CON"/>
</dbReference>
<dbReference type="PANTHER" id="PTHR35496">
    <property type="entry name" value="2S SEED STORAGE PROTEIN 1-RELATED"/>
    <property type="match status" value="1"/>
</dbReference>
<dbReference type="PANTHER" id="PTHR35496:SF20">
    <property type="entry name" value="2S SEED STORAGE PROTEIN 1-RELATED"/>
    <property type="match status" value="1"/>
</dbReference>
<dbReference type="Pfam" id="PF00234">
    <property type="entry name" value="Tryp_alpha_amyl"/>
    <property type="match status" value="1"/>
</dbReference>
<dbReference type="PRINTS" id="PR00496">
    <property type="entry name" value="NAPIN"/>
</dbReference>
<dbReference type="SMART" id="SM00499">
    <property type="entry name" value="AAI"/>
    <property type="match status" value="1"/>
</dbReference>
<dbReference type="SUPFAM" id="SSF47699">
    <property type="entry name" value="Bifunctional inhibitor/lipid-transfer protein/seed storage 2S albumin"/>
    <property type="match status" value="1"/>
</dbReference>
<accession>Q39649</accession>
<evidence type="ECO:0000250" key="1">
    <source>
        <dbReference type="UniProtKB" id="P04403"/>
    </source>
</evidence>
<evidence type="ECO:0000255" key="2"/>
<evidence type="ECO:0000269" key="3">
    <source>
    </source>
</evidence>
<evidence type="ECO:0000269" key="4">
    <source>
    </source>
</evidence>
<evidence type="ECO:0000305" key="5"/>
<evidence type="ECO:0000312" key="6">
    <source>
        <dbReference type="EMBL" id="BAA03993.1"/>
    </source>
</evidence>
<organism>
    <name type="scientific">Cucurbita maxima</name>
    <name type="common">Pumpkin</name>
    <name type="synonym">Winter squash</name>
    <dbReference type="NCBI Taxonomy" id="3661"/>
    <lineage>
        <taxon>Eukaryota</taxon>
        <taxon>Viridiplantae</taxon>
        <taxon>Streptophyta</taxon>
        <taxon>Embryophyta</taxon>
        <taxon>Tracheophyta</taxon>
        <taxon>Spermatophyta</taxon>
        <taxon>Magnoliopsida</taxon>
        <taxon>eudicotyledons</taxon>
        <taxon>Gunneridae</taxon>
        <taxon>Pentapetalae</taxon>
        <taxon>rosids</taxon>
        <taxon>fabids</taxon>
        <taxon>Cucurbitales</taxon>
        <taxon>Cucurbitaceae</taxon>
        <taxon>Cucurbiteae</taxon>
        <taxon>Cucurbita</taxon>
    </lineage>
</organism>
<reference evidence="5 6" key="1">
    <citation type="journal article" date="1993" name="Plant J.">
        <title>Vesicle transport and processing of the precursor to 2S albumin in pumpkin.</title>
        <authorList>
            <person name="Hara-Nishimura I."/>
            <person name="Takeuchi Y."/>
            <person name="Inoue K."/>
            <person name="Nishimura M."/>
        </authorList>
    </citation>
    <scope>NUCLEOTIDE SEQUENCE [MRNA]</scope>
    <scope>PROTEIN SEQUENCE OF 23-56 AND 75-94</scope>
    <scope>SUBCELLULAR LOCATION</scope>
    <source>
        <strain evidence="4">cv. Kurokawa Amakuri Nankin</strain>
        <tissue evidence="6">Cotyledon</tissue>
    </source>
</reference>
<reference evidence="5" key="2">
    <citation type="journal article" date="1991" name="FEBS Lett.">
        <title>A unique vacuolar processing enzyme responsible for conversion of several proprotein precursors into the mature forms.</title>
        <authorList>
            <person name="Hara-Nishimura I."/>
            <person name="Inoue K."/>
            <person name="Nishimura M."/>
        </authorList>
    </citation>
    <scope>PROTEIN SEQUENCE OF 36-45 AND 75-84</scope>
    <source>
        <tissue evidence="4">Cotyledon</tissue>
    </source>
</reference>